<sequence length="119" mass="13244">MIIGIGIDIIELNRIEKMLDGKLKFMERILTENERNVAMELKGSRLTEFVAGRFAAKEAYSKAVGTGIGKEVSFLDIEVKNDERGKPILITSTEHIVHLSISHSKEFAVAQVVLESSSR</sequence>
<feature type="chain" id="PRO_1000117343" description="Holo-[acyl-carrier-protein] synthase">
    <location>
        <begin position="1"/>
        <end position="119"/>
    </location>
</feature>
<feature type="binding site" evidence="1">
    <location>
        <position position="8"/>
    </location>
    <ligand>
        <name>Mg(2+)</name>
        <dbReference type="ChEBI" id="CHEBI:18420"/>
    </ligand>
</feature>
<feature type="binding site" evidence="1">
    <location>
        <position position="58"/>
    </location>
    <ligand>
        <name>Mg(2+)</name>
        <dbReference type="ChEBI" id="CHEBI:18420"/>
    </ligand>
</feature>
<organism>
    <name type="scientific">Bacillus cereus (strain B4264)</name>
    <dbReference type="NCBI Taxonomy" id="405532"/>
    <lineage>
        <taxon>Bacteria</taxon>
        <taxon>Bacillati</taxon>
        <taxon>Bacillota</taxon>
        <taxon>Bacilli</taxon>
        <taxon>Bacillales</taxon>
        <taxon>Bacillaceae</taxon>
        <taxon>Bacillus</taxon>
        <taxon>Bacillus cereus group</taxon>
    </lineage>
</organism>
<proteinExistence type="inferred from homology"/>
<dbReference type="EC" id="2.7.8.7" evidence="1"/>
<dbReference type="EMBL" id="CP001176">
    <property type="protein sequence ID" value="ACK59855.1"/>
    <property type="molecule type" value="Genomic_DNA"/>
</dbReference>
<dbReference type="RefSeq" id="WP_000583415.1">
    <property type="nucleotide sequence ID" value="NC_011725.1"/>
</dbReference>
<dbReference type="SMR" id="B7H4P0"/>
<dbReference type="KEGG" id="bcb:BCB4264_A0265"/>
<dbReference type="HOGENOM" id="CLU_089696_1_2_9"/>
<dbReference type="Proteomes" id="UP000007096">
    <property type="component" value="Chromosome"/>
</dbReference>
<dbReference type="GO" id="GO:0005829">
    <property type="term" value="C:cytosol"/>
    <property type="evidence" value="ECO:0007669"/>
    <property type="project" value="TreeGrafter"/>
</dbReference>
<dbReference type="GO" id="GO:0008897">
    <property type="term" value="F:holo-[acyl-carrier-protein] synthase activity"/>
    <property type="evidence" value="ECO:0007669"/>
    <property type="project" value="UniProtKB-UniRule"/>
</dbReference>
<dbReference type="GO" id="GO:0000287">
    <property type="term" value="F:magnesium ion binding"/>
    <property type="evidence" value="ECO:0007669"/>
    <property type="project" value="UniProtKB-UniRule"/>
</dbReference>
<dbReference type="GO" id="GO:0006633">
    <property type="term" value="P:fatty acid biosynthetic process"/>
    <property type="evidence" value="ECO:0007669"/>
    <property type="project" value="UniProtKB-UniRule"/>
</dbReference>
<dbReference type="GO" id="GO:0019878">
    <property type="term" value="P:lysine biosynthetic process via aminoadipic acid"/>
    <property type="evidence" value="ECO:0007669"/>
    <property type="project" value="TreeGrafter"/>
</dbReference>
<dbReference type="Gene3D" id="3.90.470.20">
    <property type="entry name" value="4'-phosphopantetheinyl transferase domain"/>
    <property type="match status" value="1"/>
</dbReference>
<dbReference type="HAMAP" id="MF_00101">
    <property type="entry name" value="AcpS"/>
    <property type="match status" value="1"/>
</dbReference>
<dbReference type="InterPro" id="IPR008278">
    <property type="entry name" value="4-PPantetheinyl_Trfase_dom"/>
</dbReference>
<dbReference type="InterPro" id="IPR037143">
    <property type="entry name" value="4-PPantetheinyl_Trfase_dom_sf"/>
</dbReference>
<dbReference type="InterPro" id="IPR002582">
    <property type="entry name" value="ACPS"/>
</dbReference>
<dbReference type="InterPro" id="IPR050559">
    <property type="entry name" value="P-Pant_transferase_sf"/>
</dbReference>
<dbReference type="InterPro" id="IPR004568">
    <property type="entry name" value="Ppantetheine-prot_Trfase_dom"/>
</dbReference>
<dbReference type="NCBIfam" id="TIGR00516">
    <property type="entry name" value="acpS"/>
    <property type="match status" value="1"/>
</dbReference>
<dbReference type="NCBIfam" id="TIGR00556">
    <property type="entry name" value="pantethn_trn"/>
    <property type="match status" value="1"/>
</dbReference>
<dbReference type="PANTHER" id="PTHR12215:SF10">
    <property type="entry name" value="L-AMINOADIPATE-SEMIALDEHYDE DEHYDROGENASE-PHOSPHOPANTETHEINYL TRANSFERASE"/>
    <property type="match status" value="1"/>
</dbReference>
<dbReference type="PANTHER" id="PTHR12215">
    <property type="entry name" value="PHOSPHOPANTETHEINE TRANSFERASE"/>
    <property type="match status" value="1"/>
</dbReference>
<dbReference type="Pfam" id="PF01648">
    <property type="entry name" value="ACPS"/>
    <property type="match status" value="1"/>
</dbReference>
<dbReference type="SUPFAM" id="SSF56214">
    <property type="entry name" value="4'-phosphopantetheinyl transferase"/>
    <property type="match status" value="1"/>
</dbReference>
<accession>B7H4P0</accession>
<reference key="1">
    <citation type="submission" date="2008-10" db="EMBL/GenBank/DDBJ databases">
        <title>Genome sequence of Bacillus cereus B4264.</title>
        <authorList>
            <person name="Dodson R.J."/>
            <person name="Durkin A.S."/>
            <person name="Rosovitz M.J."/>
            <person name="Rasko D.A."/>
            <person name="Hoffmaster A."/>
            <person name="Ravel J."/>
            <person name="Sutton G."/>
        </authorList>
    </citation>
    <scope>NUCLEOTIDE SEQUENCE [LARGE SCALE GENOMIC DNA]</scope>
    <source>
        <strain>B4264</strain>
    </source>
</reference>
<name>ACPS_BACC4</name>
<keyword id="KW-0963">Cytoplasm</keyword>
<keyword id="KW-0275">Fatty acid biosynthesis</keyword>
<keyword id="KW-0276">Fatty acid metabolism</keyword>
<keyword id="KW-0444">Lipid biosynthesis</keyword>
<keyword id="KW-0443">Lipid metabolism</keyword>
<keyword id="KW-0460">Magnesium</keyword>
<keyword id="KW-0479">Metal-binding</keyword>
<keyword id="KW-0808">Transferase</keyword>
<gene>
    <name evidence="1" type="primary">acpS</name>
    <name type="ordered locus">BCB4264_A0265</name>
</gene>
<evidence type="ECO:0000255" key="1">
    <source>
        <dbReference type="HAMAP-Rule" id="MF_00101"/>
    </source>
</evidence>
<protein>
    <recommendedName>
        <fullName evidence="1">Holo-[acyl-carrier-protein] synthase</fullName>
        <shortName evidence="1">Holo-ACP synthase</shortName>
        <ecNumber evidence="1">2.7.8.7</ecNumber>
    </recommendedName>
    <alternativeName>
        <fullName evidence="1">4'-phosphopantetheinyl transferase AcpS</fullName>
    </alternativeName>
</protein>
<comment type="function">
    <text evidence="1">Transfers the 4'-phosphopantetheine moiety from coenzyme A to a Ser of acyl-carrier-protein.</text>
</comment>
<comment type="catalytic activity">
    <reaction evidence="1">
        <text>apo-[ACP] + CoA = holo-[ACP] + adenosine 3',5'-bisphosphate + H(+)</text>
        <dbReference type="Rhea" id="RHEA:12068"/>
        <dbReference type="Rhea" id="RHEA-COMP:9685"/>
        <dbReference type="Rhea" id="RHEA-COMP:9690"/>
        <dbReference type="ChEBI" id="CHEBI:15378"/>
        <dbReference type="ChEBI" id="CHEBI:29999"/>
        <dbReference type="ChEBI" id="CHEBI:57287"/>
        <dbReference type="ChEBI" id="CHEBI:58343"/>
        <dbReference type="ChEBI" id="CHEBI:64479"/>
        <dbReference type="EC" id="2.7.8.7"/>
    </reaction>
</comment>
<comment type="cofactor">
    <cofactor evidence="1">
        <name>Mg(2+)</name>
        <dbReference type="ChEBI" id="CHEBI:18420"/>
    </cofactor>
</comment>
<comment type="subcellular location">
    <subcellularLocation>
        <location evidence="1">Cytoplasm</location>
    </subcellularLocation>
</comment>
<comment type="similarity">
    <text evidence="1">Belongs to the P-Pant transferase superfamily. AcpS family.</text>
</comment>